<comment type="function">
    <text>May be involved in transcriptional regulation.</text>
</comment>
<comment type="subcellular location">
    <subcellularLocation>
        <location evidence="5">Nucleus</location>
    </subcellularLocation>
</comment>
<comment type="similarity">
    <text evidence="5">Belongs to the krueppel C2H2-type zinc-finger protein family.</text>
</comment>
<comment type="sequence caution" evidence="5">
    <conflict type="erroneous initiation">
        <sequence resource="EMBL-CDS" id="AAG09702"/>
    </conflict>
    <text>Truncated N-terminus.</text>
</comment>
<comment type="sequence caution" evidence="5">
    <conflict type="erroneous initiation">
        <sequence resource="EMBL-CDS" id="AAI01488"/>
    </conflict>
    <text>Truncated N-terminus.</text>
</comment>
<comment type="sequence caution" evidence="5">
    <conflict type="erroneous initiation">
        <sequence resource="EMBL-CDS" id="AAI13364"/>
    </conflict>
    <text>Truncated N-terminus.</text>
</comment>
<gene>
    <name evidence="6" type="primary">ZNF287</name>
    <name type="synonym">ZKSCAN13</name>
</gene>
<sequence>MLASSKRMNSSSRSQILLRWKSDKAQSGPYNVEKEILTSRFLRDTETCRQNFRNFPYPDLAGPRKALSQLRELCLKWLRPEIHSKEQILELLVLEQFLTILPGEVRTWVKSQYPESSEEAVTLVEDLTQILEEEAPQNSTLSQDTPEEDPRGKHAFQTGWLNDLVTKESMTFKDVAVDITQEDWELMRPVQKELYKTVTLQNYWNMVSLGLTVYRPTVIPILEEPWMVIKEILEGPSPEWETKAQACTPVEDMSKLTKEETHTIKLEDSYDYDDRLERRGKGGFWKIHTDERGFSLKSVLSQEYDPTEECLSKYDIYRNNFEKHSNLIVQFDTQLDNKTSVYNEGRATFNHVSYGIVHRKILPGEKPYKCNVCGKKFRKYPSLLKHQSTHAKEKSYECEECGKEFRHISSLIAHQRMHTGEKPYECHQCGKAFSQRAHLTIHQRIHTGEKPYKCDDCGKDFSQRAHLTIHQRTHTGEKPYKCLECGKTFSHSSSLINHQRVHTGEKPYICNECGKTFSQSTHLLQHQKIHTGKKPYKCNECWKVFSQSTYLIRHQRIHSGEKCYKCNECGKAFAHSSTLIQHQTTHTGEKSYICNICGKAFSQSANLTQHHRTHTGEKPYKCSVCGKAFSQSVHLTQHQRIHNGEKPFKCNICGKAYRQGANLTQHQRIHTGEKPYKCNECGKAFIYSSSLNQHQRTHTGERPYKCNECDKDFSQRTCLIQHQRIHTGEKPYACRICGKTFTQSTNLIQHQRVHTGAKHRN</sequence>
<accession>Q9HBT7</accession>
<accession>Q6IAG1</accession>
<evidence type="ECO:0000255" key="1">
    <source>
        <dbReference type="PROSITE-ProRule" id="PRU00042"/>
    </source>
</evidence>
<evidence type="ECO:0000255" key="2">
    <source>
        <dbReference type="PROSITE-ProRule" id="PRU00119"/>
    </source>
</evidence>
<evidence type="ECO:0000255" key="3">
    <source>
        <dbReference type="PROSITE-ProRule" id="PRU00187"/>
    </source>
</evidence>
<evidence type="ECO:0000256" key="4">
    <source>
        <dbReference type="SAM" id="MobiDB-lite"/>
    </source>
</evidence>
<evidence type="ECO:0000305" key="5"/>
<evidence type="ECO:0000312" key="6">
    <source>
        <dbReference type="HGNC" id="HGNC:13502"/>
    </source>
</evidence>
<proteinExistence type="evidence at protein level"/>
<keyword id="KW-0238">DNA-binding</keyword>
<keyword id="KW-0479">Metal-binding</keyword>
<keyword id="KW-0539">Nucleus</keyword>
<keyword id="KW-1267">Proteomics identification</keyword>
<keyword id="KW-1185">Reference proteome</keyword>
<keyword id="KW-0677">Repeat</keyword>
<keyword id="KW-0804">Transcription</keyword>
<keyword id="KW-0805">Transcription regulation</keyword>
<keyword id="KW-0862">Zinc</keyword>
<keyword id="KW-0863">Zinc-finger</keyword>
<feature type="chain" id="PRO_0000047511" description="Zinc finger protein 287">
    <location>
        <begin position="1"/>
        <end position="761"/>
    </location>
</feature>
<feature type="domain" description="SCAN box" evidence="3">
    <location>
        <begin position="49"/>
        <end position="131"/>
    </location>
</feature>
<feature type="domain" description="KRAB" evidence="2">
    <location>
        <begin position="170"/>
        <end position="238"/>
    </location>
</feature>
<feature type="zinc finger region" description="C2H2-type 1" evidence="1">
    <location>
        <begin position="368"/>
        <end position="390"/>
    </location>
</feature>
<feature type="zinc finger region" description="C2H2-type 2" evidence="1">
    <location>
        <begin position="396"/>
        <end position="418"/>
    </location>
</feature>
<feature type="zinc finger region" description="C2H2-type 3" evidence="1">
    <location>
        <begin position="424"/>
        <end position="446"/>
    </location>
</feature>
<feature type="zinc finger region" description="C2H2-type 4" evidence="1">
    <location>
        <begin position="452"/>
        <end position="474"/>
    </location>
</feature>
<feature type="zinc finger region" description="C2H2-type 5" evidence="1">
    <location>
        <begin position="480"/>
        <end position="502"/>
    </location>
</feature>
<feature type="zinc finger region" description="C2H2-type 6" evidence="1">
    <location>
        <begin position="508"/>
        <end position="530"/>
    </location>
</feature>
<feature type="zinc finger region" description="C2H2-type 7" evidence="1">
    <location>
        <begin position="536"/>
        <end position="558"/>
    </location>
</feature>
<feature type="zinc finger region" description="C2H2-type 8" evidence="1">
    <location>
        <begin position="564"/>
        <end position="586"/>
    </location>
</feature>
<feature type="zinc finger region" description="C2H2-type 9" evidence="1">
    <location>
        <begin position="592"/>
        <end position="614"/>
    </location>
</feature>
<feature type="zinc finger region" description="C2H2-type 10" evidence="1">
    <location>
        <begin position="620"/>
        <end position="642"/>
    </location>
</feature>
<feature type="zinc finger region" description="C2H2-type 11" evidence="1">
    <location>
        <begin position="648"/>
        <end position="670"/>
    </location>
</feature>
<feature type="zinc finger region" description="C2H2-type 12" evidence="1">
    <location>
        <begin position="676"/>
        <end position="698"/>
    </location>
</feature>
<feature type="zinc finger region" description="C2H2-type 13" evidence="1">
    <location>
        <begin position="704"/>
        <end position="726"/>
    </location>
</feature>
<feature type="zinc finger region" description="C2H2-type 14" evidence="1">
    <location>
        <begin position="732"/>
        <end position="754"/>
    </location>
</feature>
<feature type="region of interest" description="Disordered" evidence="4">
    <location>
        <begin position="134"/>
        <end position="154"/>
    </location>
</feature>
<feature type="sequence variant" id="VAR_024207" description="In dbSNP:rs7224723.">
    <original>K</original>
    <variation>T</variation>
    <location>
        <position position="281"/>
    </location>
</feature>
<organism>
    <name type="scientific">Homo sapiens</name>
    <name type="common">Human</name>
    <dbReference type="NCBI Taxonomy" id="9606"/>
    <lineage>
        <taxon>Eukaryota</taxon>
        <taxon>Metazoa</taxon>
        <taxon>Chordata</taxon>
        <taxon>Craniata</taxon>
        <taxon>Vertebrata</taxon>
        <taxon>Euteleostomi</taxon>
        <taxon>Mammalia</taxon>
        <taxon>Eutheria</taxon>
        <taxon>Euarchontoglires</taxon>
        <taxon>Primates</taxon>
        <taxon>Haplorrhini</taxon>
        <taxon>Catarrhini</taxon>
        <taxon>Hominidae</taxon>
        <taxon>Homo</taxon>
    </lineage>
</organism>
<reference key="1">
    <citation type="submission" date="1999-12" db="EMBL/GenBank/DDBJ databases">
        <title>Deletion of a novel zinc finger gene in Smith-Magenis syndrome.</title>
        <authorList>
            <person name="Romero-Pastrana F."/>
            <person name="Srivastava A.K."/>
        </authorList>
    </citation>
    <scope>NUCLEOTIDE SEQUENCE [MRNA]</scope>
</reference>
<reference key="2">
    <citation type="journal article" date="2006" name="Nature">
        <title>DNA sequence of human chromosome 17 and analysis of rearrangement in the human lineage.</title>
        <authorList>
            <person name="Zody M.C."/>
            <person name="Garber M."/>
            <person name="Adams D.J."/>
            <person name="Sharpe T."/>
            <person name="Harrow J."/>
            <person name="Lupski J.R."/>
            <person name="Nicholson C."/>
            <person name="Searle S.M."/>
            <person name="Wilming L."/>
            <person name="Young S.K."/>
            <person name="Abouelleil A."/>
            <person name="Allen N.R."/>
            <person name="Bi W."/>
            <person name="Bloom T."/>
            <person name="Borowsky M.L."/>
            <person name="Bugalter B.E."/>
            <person name="Butler J."/>
            <person name="Chang J.L."/>
            <person name="Chen C.-K."/>
            <person name="Cook A."/>
            <person name="Corum B."/>
            <person name="Cuomo C.A."/>
            <person name="de Jong P.J."/>
            <person name="DeCaprio D."/>
            <person name="Dewar K."/>
            <person name="FitzGerald M."/>
            <person name="Gilbert J."/>
            <person name="Gibson R."/>
            <person name="Gnerre S."/>
            <person name="Goldstein S."/>
            <person name="Grafham D.V."/>
            <person name="Grocock R."/>
            <person name="Hafez N."/>
            <person name="Hagopian D.S."/>
            <person name="Hart E."/>
            <person name="Norman C.H."/>
            <person name="Humphray S."/>
            <person name="Jaffe D.B."/>
            <person name="Jones M."/>
            <person name="Kamal M."/>
            <person name="Khodiyar V.K."/>
            <person name="LaButti K."/>
            <person name="Laird G."/>
            <person name="Lehoczky J."/>
            <person name="Liu X."/>
            <person name="Lokyitsang T."/>
            <person name="Loveland J."/>
            <person name="Lui A."/>
            <person name="Macdonald P."/>
            <person name="Major J.E."/>
            <person name="Matthews L."/>
            <person name="Mauceli E."/>
            <person name="McCarroll S.A."/>
            <person name="Mihalev A.H."/>
            <person name="Mudge J."/>
            <person name="Nguyen C."/>
            <person name="Nicol R."/>
            <person name="O'Leary S.B."/>
            <person name="Osoegawa K."/>
            <person name="Schwartz D.C."/>
            <person name="Shaw-Smith C."/>
            <person name="Stankiewicz P."/>
            <person name="Steward C."/>
            <person name="Swarbreck D."/>
            <person name="Venkataraman V."/>
            <person name="Whittaker C.A."/>
            <person name="Yang X."/>
            <person name="Zimmer A.R."/>
            <person name="Bradley A."/>
            <person name="Hubbard T."/>
            <person name="Birren B.W."/>
            <person name="Rogers J."/>
            <person name="Lander E.S."/>
            <person name="Nusbaum C."/>
        </authorList>
    </citation>
    <scope>NUCLEOTIDE SEQUENCE [LARGE SCALE GENOMIC DNA]</scope>
</reference>
<reference key="3">
    <citation type="journal article" date="2004" name="Genome Res.">
        <title>The status, quality, and expansion of the NIH full-length cDNA project: the Mammalian Gene Collection (MGC).</title>
        <authorList>
            <consortium name="The MGC Project Team"/>
        </authorList>
    </citation>
    <scope>NUCLEOTIDE SEQUENCE [LARGE SCALE MRNA]</scope>
    <source>
        <tissue>Brain</tissue>
    </source>
</reference>
<reference key="4">
    <citation type="submission" date="2004-06" db="EMBL/GenBank/DDBJ databases">
        <title>Cloning of human full open reading frames in Gateway(TM) system entry vector (pDONR201).</title>
        <authorList>
            <person name="Ebert L."/>
            <person name="Schick M."/>
            <person name="Neubert P."/>
            <person name="Schatten R."/>
            <person name="Henze S."/>
            <person name="Korn B."/>
        </authorList>
    </citation>
    <scope>NUCLEOTIDE SEQUENCE [LARGE SCALE MRNA] OF 8-761</scope>
</reference>
<name>ZN287_HUMAN</name>
<protein>
    <recommendedName>
        <fullName evidence="5">Zinc finger protein 287</fullName>
    </recommendedName>
    <alternativeName>
        <fullName>Zinc finger protein with KRAB and SCAN domains 13</fullName>
    </alternativeName>
</protein>
<dbReference type="EMBL" id="AF217227">
    <property type="protein sequence ID" value="AAG09702.1"/>
    <property type="status" value="ALT_INIT"/>
    <property type="molecule type" value="mRNA"/>
</dbReference>
<dbReference type="EMBL" id="AC127540">
    <property type="status" value="NOT_ANNOTATED_CDS"/>
    <property type="molecule type" value="Genomic_DNA"/>
</dbReference>
<dbReference type="EMBL" id="BC101487">
    <property type="protein sequence ID" value="AAI01488.1"/>
    <property type="status" value="ALT_INIT"/>
    <property type="molecule type" value="mRNA"/>
</dbReference>
<dbReference type="EMBL" id="BC113363">
    <property type="protein sequence ID" value="AAI13364.1"/>
    <property type="status" value="ALT_INIT"/>
    <property type="molecule type" value="mRNA"/>
</dbReference>
<dbReference type="EMBL" id="CR457194">
    <property type="protein sequence ID" value="CAG33475.1"/>
    <property type="molecule type" value="mRNA"/>
</dbReference>
<dbReference type="CCDS" id="CCDS11179.2"/>
<dbReference type="RefSeq" id="NP_001333096.1">
    <property type="nucleotide sequence ID" value="NM_001346167.2"/>
</dbReference>
<dbReference type="RefSeq" id="NP_001333097.1">
    <property type="nucleotide sequence ID" value="NM_001346168.2"/>
</dbReference>
<dbReference type="RefSeq" id="NP_001333098.1">
    <property type="nucleotide sequence ID" value="NM_001346169.2"/>
</dbReference>
<dbReference type="RefSeq" id="NP_065704.2">
    <property type="nucleotide sequence ID" value="NM_020653.4"/>
</dbReference>
<dbReference type="RefSeq" id="XP_011522270.1">
    <property type="nucleotide sequence ID" value="XM_011523968.2"/>
</dbReference>
<dbReference type="SMR" id="Q9HBT7"/>
<dbReference type="BioGRID" id="121490">
    <property type="interactions" value="13"/>
</dbReference>
<dbReference type="FunCoup" id="Q9HBT7">
    <property type="interactions" value="72"/>
</dbReference>
<dbReference type="IntAct" id="Q9HBT7">
    <property type="interactions" value="15"/>
</dbReference>
<dbReference type="STRING" id="9606.ENSP00000379169"/>
<dbReference type="iPTMnet" id="Q9HBT7"/>
<dbReference type="PhosphoSitePlus" id="Q9HBT7"/>
<dbReference type="BioMuta" id="ZNF287"/>
<dbReference type="DMDM" id="20141038"/>
<dbReference type="jPOST" id="Q9HBT7"/>
<dbReference type="MassIVE" id="Q9HBT7"/>
<dbReference type="PaxDb" id="9606-ENSP00000379168"/>
<dbReference type="PeptideAtlas" id="Q9HBT7"/>
<dbReference type="ProteomicsDB" id="81591"/>
<dbReference type="Antibodypedia" id="25338">
    <property type="antibodies" value="196 antibodies from 29 providers"/>
</dbReference>
<dbReference type="DNASU" id="57336"/>
<dbReference type="Ensembl" id="ENST00000395824.5">
    <property type="protein sequence ID" value="ENSP00000379168.1"/>
    <property type="gene ID" value="ENSG00000141040.15"/>
</dbReference>
<dbReference type="Ensembl" id="ENST00000395825.4">
    <property type="protein sequence ID" value="ENSP00000379169.3"/>
    <property type="gene ID" value="ENSG00000141040.15"/>
</dbReference>
<dbReference type="GeneID" id="57336"/>
<dbReference type="KEGG" id="hsa:57336"/>
<dbReference type="MANE-Select" id="ENST00000395825.4">
    <property type="protein sequence ID" value="ENSP00000379169.3"/>
    <property type="RefSeq nucleotide sequence ID" value="NM_020653.4"/>
    <property type="RefSeq protein sequence ID" value="NP_065704.2"/>
</dbReference>
<dbReference type="UCSC" id="uc002gqi.3">
    <property type="organism name" value="human"/>
</dbReference>
<dbReference type="AGR" id="HGNC:13502"/>
<dbReference type="CTD" id="57336"/>
<dbReference type="DisGeNET" id="57336"/>
<dbReference type="GeneCards" id="ZNF287"/>
<dbReference type="HGNC" id="HGNC:13502">
    <property type="gene designation" value="ZNF287"/>
</dbReference>
<dbReference type="HPA" id="ENSG00000141040">
    <property type="expression patterns" value="Low tissue specificity"/>
</dbReference>
<dbReference type="MalaCards" id="ZNF287"/>
<dbReference type="neXtProt" id="NX_Q9HBT7"/>
<dbReference type="OpenTargets" id="ENSG00000141040"/>
<dbReference type="PharmGKB" id="PA37788"/>
<dbReference type="VEuPathDB" id="HostDB:ENSG00000141040"/>
<dbReference type="eggNOG" id="KOG1721">
    <property type="taxonomic scope" value="Eukaryota"/>
</dbReference>
<dbReference type="GeneTree" id="ENSGT00940000162333"/>
<dbReference type="HOGENOM" id="CLU_002678_49_8_1"/>
<dbReference type="InParanoid" id="Q9HBT7"/>
<dbReference type="OMA" id="KTEAQEC"/>
<dbReference type="OrthoDB" id="9441525at2759"/>
<dbReference type="PAN-GO" id="Q9HBT7">
    <property type="GO annotations" value="3 GO annotations based on evolutionary models"/>
</dbReference>
<dbReference type="PhylomeDB" id="Q9HBT7"/>
<dbReference type="TreeFam" id="TF350843"/>
<dbReference type="PathwayCommons" id="Q9HBT7"/>
<dbReference type="Reactome" id="R-HSA-212436">
    <property type="pathway name" value="Generic Transcription Pathway"/>
</dbReference>
<dbReference type="SignaLink" id="Q9HBT7"/>
<dbReference type="Pharos" id="Q9HBT7">
    <property type="development level" value="Tdark"/>
</dbReference>
<dbReference type="PRO" id="PR:Q9HBT7"/>
<dbReference type="Proteomes" id="UP000005640">
    <property type="component" value="Chromosome 17"/>
</dbReference>
<dbReference type="RNAct" id="Q9HBT7">
    <property type="molecule type" value="protein"/>
</dbReference>
<dbReference type="Bgee" id="ENSG00000141040">
    <property type="expression patterns" value="Expressed in primordial germ cell in gonad and 113 other cell types or tissues"/>
</dbReference>
<dbReference type="ExpressionAtlas" id="Q9HBT7">
    <property type="expression patterns" value="baseline and differential"/>
</dbReference>
<dbReference type="GO" id="GO:0005634">
    <property type="term" value="C:nucleus"/>
    <property type="evidence" value="ECO:0007669"/>
    <property type="project" value="UniProtKB-SubCell"/>
</dbReference>
<dbReference type="GO" id="GO:0000981">
    <property type="term" value="F:DNA-binding transcription factor activity, RNA polymerase II-specific"/>
    <property type="evidence" value="ECO:0000318"/>
    <property type="project" value="GO_Central"/>
</dbReference>
<dbReference type="GO" id="GO:0000978">
    <property type="term" value="F:RNA polymerase II cis-regulatory region sequence-specific DNA binding"/>
    <property type="evidence" value="ECO:0000318"/>
    <property type="project" value="GO_Central"/>
</dbReference>
<dbReference type="GO" id="GO:0008270">
    <property type="term" value="F:zinc ion binding"/>
    <property type="evidence" value="ECO:0007669"/>
    <property type="project" value="UniProtKB-KW"/>
</dbReference>
<dbReference type="GO" id="GO:0045893">
    <property type="term" value="P:positive regulation of DNA-templated transcription"/>
    <property type="evidence" value="ECO:0007669"/>
    <property type="project" value="Ensembl"/>
</dbReference>
<dbReference type="GO" id="GO:0001817">
    <property type="term" value="P:regulation of cytokine production"/>
    <property type="evidence" value="ECO:0007669"/>
    <property type="project" value="Ensembl"/>
</dbReference>
<dbReference type="GO" id="GO:0006357">
    <property type="term" value="P:regulation of transcription by RNA polymerase II"/>
    <property type="evidence" value="ECO:0000318"/>
    <property type="project" value="GO_Central"/>
</dbReference>
<dbReference type="CDD" id="cd07765">
    <property type="entry name" value="KRAB_A-box"/>
    <property type="match status" value="1"/>
</dbReference>
<dbReference type="CDD" id="cd07936">
    <property type="entry name" value="SCAN"/>
    <property type="match status" value="1"/>
</dbReference>
<dbReference type="FunFam" id="3.30.160.60:FF:000295">
    <property type="entry name" value="zinc finger protein 19"/>
    <property type="match status" value="2"/>
</dbReference>
<dbReference type="FunFam" id="1.10.4020.10:FF:000001">
    <property type="entry name" value="zinc finger protein 263 isoform X1"/>
    <property type="match status" value="1"/>
</dbReference>
<dbReference type="FunFam" id="3.30.160.60:FF:000252">
    <property type="entry name" value="Zinc finger protein 287"/>
    <property type="match status" value="2"/>
</dbReference>
<dbReference type="FunFam" id="3.30.160.60:FF:000269">
    <property type="entry name" value="Zinc finger protein 287"/>
    <property type="match status" value="2"/>
</dbReference>
<dbReference type="FunFam" id="3.30.160.60:FF:000479">
    <property type="entry name" value="Zinc finger protein 287"/>
    <property type="match status" value="2"/>
</dbReference>
<dbReference type="FunFam" id="3.30.160.60:FF:002029">
    <property type="entry name" value="Zinc finger protein 287"/>
    <property type="match status" value="1"/>
</dbReference>
<dbReference type="FunFam" id="3.30.160.60:FF:001178">
    <property type="entry name" value="zinc finger protein 287"/>
    <property type="match status" value="1"/>
</dbReference>
<dbReference type="FunFam" id="3.30.160.60:FF:002343">
    <property type="entry name" value="Zinc finger protein 33A"/>
    <property type="match status" value="1"/>
</dbReference>
<dbReference type="FunFam" id="3.30.160.60:FF:000016">
    <property type="entry name" value="zinc finger protein 37 homolog"/>
    <property type="match status" value="1"/>
</dbReference>
<dbReference type="FunFam" id="3.30.160.60:FF:001498">
    <property type="entry name" value="Zinc finger protein 404"/>
    <property type="match status" value="1"/>
</dbReference>
<dbReference type="FunFam" id="3.30.160.60:FF:002090">
    <property type="entry name" value="Zinc finger protein 473"/>
    <property type="match status" value="1"/>
</dbReference>
<dbReference type="Gene3D" id="6.10.140.140">
    <property type="match status" value="1"/>
</dbReference>
<dbReference type="Gene3D" id="3.30.160.60">
    <property type="entry name" value="Classic Zinc Finger"/>
    <property type="match status" value="14"/>
</dbReference>
<dbReference type="Gene3D" id="1.10.4020.10">
    <property type="entry name" value="DNA breaking-rejoining enzymes"/>
    <property type="match status" value="1"/>
</dbReference>
<dbReference type="InterPro" id="IPR001909">
    <property type="entry name" value="KRAB"/>
</dbReference>
<dbReference type="InterPro" id="IPR036051">
    <property type="entry name" value="KRAB_dom_sf"/>
</dbReference>
<dbReference type="InterPro" id="IPR003309">
    <property type="entry name" value="SCAN_dom"/>
</dbReference>
<dbReference type="InterPro" id="IPR038269">
    <property type="entry name" value="SCAN_sf"/>
</dbReference>
<dbReference type="InterPro" id="IPR050758">
    <property type="entry name" value="Znf_C2H2-type"/>
</dbReference>
<dbReference type="InterPro" id="IPR036236">
    <property type="entry name" value="Znf_C2H2_sf"/>
</dbReference>
<dbReference type="InterPro" id="IPR013087">
    <property type="entry name" value="Znf_C2H2_type"/>
</dbReference>
<dbReference type="PANTHER" id="PTHR23234:SF8">
    <property type="entry name" value="C2H2-TYPE DOMAIN-CONTAINING PROTEIN"/>
    <property type="match status" value="1"/>
</dbReference>
<dbReference type="PANTHER" id="PTHR23234">
    <property type="entry name" value="ZNF44 PROTEIN"/>
    <property type="match status" value="1"/>
</dbReference>
<dbReference type="Pfam" id="PF01352">
    <property type="entry name" value="KRAB"/>
    <property type="match status" value="1"/>
</dbReference>
<dbReference type="Pfam" id="PF02023">
    <property type="entry name" value="SCAN"/>
    <property type="match status" value="1"/>
</dbReference>
<dbReference type="Pfam" id="PF00096">
    <property type="entry name" value="zf-C2H2"/>
    <property type="match status" value="14"/>
</dbReference>
<dbReference type="SMART" id="SM00349">
    <property type="entry name" value="KRAB"/>
    <property type="match status" value="1"/>
</dbReference>
<dbReference type="SMART" id="SM00431">
    <property type="entry name" value="SCAN"/>
    <property type="match status" value="1"/>
</dbReference>
<dbReference type="SMART" id="SM00355">
    <property type="entry name" value="ZnF_C2H2"/>
    <property type="match status" value="14"/>
</dbReference>
<dbReference type="SUPFAM" id="SSF57667">
    <property type="entry name" value="beta-beta-alpha zinc fingers"/>
    <property type="match status" value="8"/>
</dbReference>
<dbReference type="SUPFAM" id="SSF109640">
    <property type="entry name" value="KRAB domain (Kruppel-associated box)"/>
    <property type="match status" value="1"/>
</dbReference>
<dbReference type="SUPFAM" id="SSF47353">
    <property type="entry name" value="Retrovirus capsid dimerization domain-like"/>
    <property type="match status" value="1"/>
</dbReference>
<dbReference type="PROSITE" id="PS50805">
    <property type="entry name" value="KRAB"/>
    <property type="match status" value="1"/>
</dbReference>
<dbReference type="PROSITE" id="PS50804">
    <property type="entry name" value="SCAN_BOX"/>
    <property type="match status" value="1"/>
</dbReference>
<dbReference type="PROSITE" id="PS00028">
    <property type="entry name" value="ZINC_FINGER_C2H2_1"/>
    <property type="match status" value="14"/>
</dbReference>
<dbReference type="PROSITE" id="PS50157">
    <property type="entry name" value="ZINC_FINGER_C2H2_2"/>
    <property type="match status" value="14"/>
</dbReference>